<evidence type="ECO:0000250" key="1">
    <source>
        <dbReference type="UniProtKB" id="P19414"/>
    </source>
</evidence>
<evidence type="ECO:0000250" key="2">
    <source>
        <dbReference type="UniProtKB" id="P20004"/>
    </source>
</evidence>
<evidence type="ECO:0000269" key="3">
    <source>
    </source>
</evidence>
<evidence type="ECO:0000269" key="4">
    <source>
    </source>
</evidence>
<evidence type="ECO:0000269" key="5">
    <source>
    </source>
</evidence>
<evidence type="ECO:0000269" key="6">
    <source>
    </source>
</evidence>
<evidence type="ECO:0000303" key="7">
    <source>
    </source>
</evidence>
<evidence type="ECO:0000305" key="8"/>
<evidence type="ECO:0000312" key="9">
    <source>
        <dbReference type="Araport" id="AT4G35830"/>
    </source>
</evidence>
<evidence type="ECO:0000312" key="10">
    <source>
        <dbReference type="EMBL" id="CAA21469.1"/>
    </source>
</evidence>
<evidence type="ECO:0007744" key="11">
    <source>
    </source>
</evidence>
<gene>
    <name evidence="7" type="primary">ACO1</name>
    <name type="synonym">ACO</name>
    <name evidence="9" type="ordered locus">At4g35830</name>
    <name evidence="10" type="ORF">F4B14.100</name>
</gene>
<organism>
    <name type="scientific">Arabidopsis thaliana</name>
    <name type="common">Mouse-ear cress</name>
    <dbReference type="NCBI Taxonomy" id="3702"/>
    <lineage>
        <taxon>Eukaryota</taxon>
        <taxon>Viridiplantae</taxon>
        <taxon>Streptophyta</taxon>
        <taxon>Embryophyta</taxon>
        <taxon>Tracheophyta</taxon>
        <taxon>Spermatophyta</taxon>
        <taxon>Magnoliopsida</taxon>
        <taxon>eudicotyledons</taxon>
        <taxon>Gunneridae</taxon>
        <taxon>Pentapetalae</taxon>
        <taxon>rosids</taxon>
        <taxon>malvids</taxon>
        <taxon>Brassicales</taxon>
        <taxon>Brassicaceae</taxon>
        <taxon>Camelineae</taxon>
        <taxon>Arabidopsis</taxon>
    </lineage>
</organism>
<protein>
    <recommendedName>
        <fullName evidence="7">Aconitate hydratase 1</fullName>
        <shortName evidence="7">Aconitase 1</shortName>
        <ecNumber evidence="1">4.2.1.3</ecNumber>
    </recommendedName>
    <alternativeName>
        <fullName evidence="7">Citrate hydro-lyase 1</fullName>
    </alternativeName>
</protein>
<keyword id="KW-0004">4Fe-4S</keyword>
<keyword id="KW-0007">Acetylation</keyword>
<keyword id="KW-0025">Alternative splicing</keyword>
<keyword id="KW-0963">Cytoplasm</keyword>
<keyword id="KW-0903">Direct protein sequencing</keyword>
<keyword id="KW-0408">Iron</keyword>
<keyword id="KW-0411">Iron-sulfur</keyword>
<keyword id="KW-0456">Lyase</keyword>
<keyword id="KW-0479">Metal-binding</keyword>
<keyword id="KW-0496">Mitochondrion</keyword>
<keyword id="KW-1185">Reference proteome</keyword>
<keyword id="KW-0816">Tricarboxylic acid cycle</keyword>
<dbReference type="EC" id="4.2.1.3" evidence="1"/>
<dbReference type="EMBL" id="X82839">
    <property type="protein sequence ID" value="CAA58046.1"/>
    <property type="status" value="ALT_INIT"/>
    <property type="molecule type" value="mRNA"/>
</dbReference>
<dbReference type="EMBL" id="AL031986">
    <property type="protein sequence ID" value="CAA21469.1"/>
    <property type="molecule type" value="Genomic_DNA"/>
</dbReference>
<dbReference type="EMBL" id="AL161588">
    <property type="protein sequence ID" value="CAB81492.1"/>
    <property type="molecule type" value="Genomic_DNA"/>
</dbReference>
<dbReference type="EMBL" id="CP002687">
    <property type="protein sequence ID" value="AEE86576.1"/>
    <property type="molecule type" value="Genomic_DNA"/>
</dbReference>
<dbReference type="EMBL" id="AY062772">
    <property type="protein sequence ID" value="AAL32850.1"/>
    <property type="molecule type" value="mRNA"/>
</dbReference>
<dbReference type="PIR" id="T04693">
    <property type="entry name" value="T04693"/>
</dbReference>
<dbReference type="RefSeq" id="NP_195308.1">
    <molecule id="Q42560-1"/>
    <property type="nucleotide sequence ID" value="NM_119749.4"/>
</dbReference>
<dbReference type="SMR" id="Q42560"/>
<dbReference type="BioGRID" id="15019">
    <property type="interactions" value="22"/>
</dbReference>
<dbReference type="FunCoup" id="Q42560">
    <property type="interactions" value="2798"/>
</dbReference>
<dbReference type="IntAct" id="Q42560">
    <property type="interactions" value="1"/>
</dbReference>
<dbReference type="STRING" id="3702.Q42560"/>
<dbReference type="iPTMnet" id="Q42560"/>
<dbReference type="MetOSite" id="Q42560"/>
<dbReference type="PaxDb" id="3702-AT4G35830.1"/>
<dbReference type="ProteomicsDB" id="244724">
    <molecule id="Q42560-1"/>
</dbReference>
<dbReference type="EnsemblPlants" id="AT4G35830.1">
    <molecule id="Q42560-1"/>
    <property type="protein sequence ID" value="AT4G35830.1"/>
    <property type="gene ID" value="AT4G35830"/>
</dbReference>
<dbReference type="GeneID" id="829737"/>
<dbReference type="Gramene" id="AT4G35830.1">
    <molecule id="Q42560-1"/>
    <property type="protein sequence ID" value="AT4G35830.1"/>
    <property type="gene ID" value="AT4G35830"/>
</dbReference>
<dbReference type="KEGG" id="ath:AT4G35830"/>
<dbReference type="Araport" id="AT4G35830"/>
<dbReference type="TAIR" id="AT4G35830">
    <property type="gene designation" value="ACO1"/>
</dbReference>
<dbReference type="eggNOG" id="KOG0452">
    <property type="taxonomic scope" value="Eukaryota"/>
</dbReference>
<dbReference type="InParanoid" id="Q42560"/>
<dbReference type="OrthoDB" id="2224430at2759"/>
<dbReference type="PhylomeDB" id="Q42560"/>
<dbReference type="BioCyc" id="MetaCyc:AT4G35830-MONOMER"/>
<dbReference type="BRENDA" id="1.14.17.4">
    <property type="organism ID" value="399"/>
</dbReference>
<dbReference type="UniPathway" id="UPA00223">
    <property type="reaction ID" value="UER00718"/>
</dbReference>
<dbReference type="CD-CODE" id="4299E36E">
    <property type="entry name" value="Nucleolus"/>
</dbReference>
<dbReference type="PRO" id="PR:Q42560"/>
<dbReference type="Proteomes" id="UP000006548">
    <property type="component" value="Chromosome 4"/>
</dbReference>
<dbReference type="ExpressionAtlas" id="Q42560">
    <property type="expression patterns" value="baseline and differential"/>
</dbReference>
<dbReference type="GO" id="GO:0048046">
    <property type="term" value="C:apoplast"/>
    <property type="evidence" value="ECO:0007005"/>
    <property type="project" value="TAIR"/>
</dbReference>
<dbReference type="GO" id="GO:0005829">
    <property type="term" value="C:cytosol"/>
    <property type="evidence" value="ECO:0007005"/>
    <property type="project" value="TAIR"/>
</dbReference>
<dbReference type="GO" id="GO:0005739">
    <property type="term" value="C:mitochondrion"/>
    <property type="evidence" value="ECO:0007005"/>
    <property type="project" value="TAIR"/>
</dbReference>
<dbReference type="GO" id="GO:0000325">
    <property type="term" value="C:plant-type vacuole"/>
    <property type="evidence" value="ECO:0007005"/>
    <property type="project" value="TAIR"/>
</dbReference>
<dbReference type="GO" id="GO:0005886">
    <property type="term" value="C:plasma membrane"/>
    <property type="evidence" value="ECO:0007005"/>
    <property type="project" value="TAIR"/>
</dbReference>
<dbReference type="GO" id="GO:0009506">
    <property type="term" value="C:plasmodesma"/>
    <property type="evidence" value="ECO:0007005"/>
    <property type="project" value="TAIR"/>
</dbReference>
<dbReference type="GO" id="GO:0051539">
    <property type="term" value="F:4 iron, 4 sulfur cluster binding"/>
    <property type="evidence" value="ECO:0007669"/>
    <property type="project" value="UniProtKB-KW"/>
</dbReference>
<dbReference type="GO" id="GO:0003994">
    <property type="term" value="F:aconitate hydratase activity"/>
    <property type="evidence" value="ECO:0000315"/>
    <property type="project" value="UniProtKB"/>
</dbReference>
<dbReference type="GO" id="GO:0005507">
    <property type="term" value="F:copper ion binding"/>
    <property type="evidence" value="ECO:0007005"/>
    <property type="project" value="TAIR"/>
</dbReference>
<dbReference type="GO" id="GO:0048027">
    <property type="term" value="F:mRNA 5'-UTR binding"/>
    <property type="evidence" value="ECO:0000314"/>
    <property type="project" value="TAIR"/>
</dbReference>
<dbReference type="GO" id="GO:0006101">
    <property type="term" value="P:citrate metabolic process"/>
    <property type="evidence" value="ECO:0000315"/>
    <property type="project" value="TAIR"/>
</dbReference>
<dbReference type="GO" id="GO:0006102">
    <property type="term" value="P:isocitrate metabolic process"/>
    <property type="evidence" value="ECO:0000315"/>
    <property type="project" value="TAIR"/>
</dbReference>
<dbReference type="GO" id="GO:1990641">
    <property type="term" value="P:response to iron ion starvation"/>
    <property type="evidence" value="ECO:0000270"/>
    <property type="project" value="UniProtKB"/>
</dbReference>
<dbReference type="GO" id="GO:0006099">
    <property type="term" value="P:tricarboxylic acid cycle"/>
    <property type="evidence" value="ECO:0007669"/>
    <property type="project" value="UniProtKB-UniPathway"/>
</dbReference>
<dbReference type="CDD" id="cd01586">
    <property type="entry name" value="AcnA_IRP"/>
    <property type="match status" value="1"/>
</dbReference>
<dbReference type="CDD" id="cd01580">
    <property type="entry name" value="AcnA_IRP_Swivel"/>
    <property type="match status" value="1"/>
</dbReference>
<dbReference type="FunFam" id="3.20.19.10:FF:000001">
    <property type="entry name" value="Aconitate hydratase"/>
    <property type="match status" value="1"/>
</dbReference>
<dbReference type="FunFam" id="3.30.499.10:FF:000002">
    <property type="entry name" value="Aconitate hydratase"/>
    <property type="match status" value="1"/>
</dbReference>
<dbReference type="FunFam" id="3.30.499.10:FF:000005">
    <property type="entry name" value="cytoplasmic aconitate hydratase"/>
    <property type="match status" value="1"/>
</dbReference>
<dbReference type="Gene3D" id="6.10.190.10">
    <property type="match status" value="1"/>
</dbReference>
<dbReference type="Gene3D" id="3.30.499.10">
    <property type="entry name" value="Aconitase, domain 3"/>
    <property type="match status" value="2"/>
</dbReference>
<dbReference type="Gene3D" id="3.20.19.10">
    <property type="entry name" value="Aconitase, domain 4"/>
    <property type="match status" value="1"/>
</dbReference>
<dbReference type="InterPro" id="IPR044137">
    <property type="entry name" value="AcnA_IRP_Swivel"/>
</dbReference>
<dbReference type="InterPro" id="IPR015931">
    <property type="entry name" value="Acnase/IPM_dHydase_lsu_aba_1/3"/>
</dbReference>
<dbReference type="InterPro" id="IPR001030">
    <property type="entry name" value="Acoase/IPM_deHydtase_lsu_aba"/>
</dbReference>
<dbReference type="InterPro" id="IPR015928">
    <property type="entry name" value="Aconitase/3IPM_dehydase_swvl"/>
</dbReference>
<dbReference type="InterPro" id="IPR006249">
    <property type="entry name" value="Aconitase/IRP2"/>
</dbReference>
<dbReference type="InterPro" id="IPR018136">
    <property type="entry name" value="Aconitase_4Fe-4S_BS"/>
</dbReference>
<dbReference type="InterPro" id="IPR036008">
    <property type="entry name" value="Aconitase_4Fe-4S_dom"/>
</dbReference>
<dbReference type="InterPro" id="IPR000573">
    <property type="entry name" value="AconitaseA/IPMdHydase_ssu_swvl"/>
</dbReference>
<dbReference type="NCBIfam" id="TIGR01341">
    <property type="entry name" value="aconitase_1"/>
    <property type="match status" value="1"/>
</dbReference>
<dbReference type="NCBIfam" id="NF006757">
    <property type="entry name" value="PRK09277.1"/>
    <property type="match status" value="1"/>
</dbReference>
<dbReference type="NCBIfam" id="NF009520">
    <property type="entry name" value="PRK12881.1"/>
    <property type="match status" value="1"/>
</dbReference>
<dbReference type="PANTHER" id="PTHR11670">
    <property type="entry name" value="ACONITASE/IRON-RESPONSIVE ELEMENT FAMILY MEMBER"/>
    <property type="match status" value="1"/>
</dbReference>
<dbReference type="Pfam" id="PF00330">
    <property type="entry name" value="Aconitase"/>
    <property type="match status" value="1"/>
</dbReference>
<dbReference type="Pfam" id="PF00694">
    <property type="entry name" value="Aconitase_C"/>
    <property type="match status" value="1"/>
</dbReference>
<dbReference type="PRINTS" id="PR00415">
    <property type="entry name" value="ACONITASE"/>
</dbReference>
<dbReference type="SUPFAM" id="SSF53732">
    <property type="entry name" value="Aconitase iron-sulfur domain"/>
    <property type="match status" value="1"/>
</dbReference>
<dbReference type="SUPFAM" id="SSF52016">
    <property type="entry name" value="LeuD/IlvD-like"/>
    <property type="match status" value="1"/>
</dbReference>
<dbReference type="PROSITE" id="PS00450">
    <property type="entry name" value="ACONITASE_1"/>
    <property type="match status" value="1"/>
</dbReference>
<dbReference type="PROSITE" id="PS01244">
    <property type="entry name" value="ACONITASE_2"/>
    <property type="match status" value="1"/>
</dbReference>
<proteinExistence type="evidence at protein level"/>
<comment type="function">
    <text evidence="4 6">Catalyzes the isomerization of citrate to isocitrate via cis-aconitate. Contributes to oxidative stress tolerance (PubMed:17013749). May have a role in respiration (PubMed:25061985).</text>
</comment>
<comment type="catalytic activity">
    <reaction evidence="1">
        <text>citrate = D-threo-isocitrate</text>
        <dbReference type="Rhea" id="RHEA:10336"/>
        <dbReference type="ChEBI" id="CHEBI:15562"/>
        <dbReference type="ChEBI" id="CHEBI:16947"/>
        <dbReference type="EC" id="4.2.1.3"/>
    </reaction>
</comment>
<comment type="cofactor">
    <cofactor evidence="2">
        <name>[4Fe-4S] cluster</name>
        <dbReference type="ChEBI" id="CHEBI:49883"/>
    </cofactor>
    <text evidence="2">Binds 1 [4Fe-4S] cluster per subunit.</text>
</comment>
<comment type="pathway">
    <text evidence="1">Carbohydrate metabolism; tricarboxylic acid cycle; isocitrate from oxaloacetate: step 2/2.</text>
</comment>
<comment type="subunit">
    <text evidence="2">Monomer.</text>
</comment>
<comment type="subcellular location">
    <subcellularLocation>
        <location evidence="3">Cytoplasm</location>
    </subcellularLocation>
    <subcellularLocation>
        <location evidence="3">Mitochondrion</location>
    </subcellularLocation>
</comment>
<comment type="alternative products">
    <event type="alternative splicing"/>
    <isoform>
        <id>Q42560-1</id>
        <name>1</name>
        <sequence type="displayed"/>
    </isoform>
    <text>A number of isoforms are produced. According to EST sequences.</text>
</comment>
<comment type="tissue specificity">
    <text evidence="5">Mostly expressed in roots, stems and leaves, also present in stems and flowers.</text>
</comment>
<comment type="induction">
    <text evidence="5">Slight level decrease after 3 days of iron starvation.</text>
</comment>
<comment type="disruption phenotype">
    <text evidence="4 5 6">Reduced cytosolic and mitochondrial aconitase (ACO) activities by 70 and 20 precent, respectively (PubMed:17013749, PubMed:17437406). Increased tolerance to oxidative stress mediated by paraquat, a superoxide-generating agent (PubMed:17013749). Slightly higher production of CO(2) (PubMed:25061985).</text>
</comment>
<comment type="similarity">
    <text evidence="8">Belongs to the aconitase/IPM isomerase family.</text>
</comment>
<comment type="sequence caution" evidence="8">
    <conflict type="erroneous initiation">
        <sequence resource="EMBL-CDS" id="CAA58046"/>
    </conflict>
    <text>Extended N-terminus.</text>
</comment>
<feature type="initiator methionine" description="Removed" evidence="11">
    <location>
        <position position="1"/>
    </location>
</feature>
<feature type="chain" id="PRO_0000076651" description="Aconitate hydratase 1">
    <location>
        <begin position="2"/>
        <end position="898"/>
    </location>
</feature>
<feature type="binding site" evidence="2">
    <location>
        <position position="90"/>
    </location>
    <ligand>
        <name>substrate</name>
    </ligand>
</feature>
<feature type="binding site" evidence="2">
    <location>
        <begin position="209"/>
        <end position="211"/>
    </location>
    <ligand>
        <name>substrate</name>
    </ligand>
</feature>
<feature type="binding site" evidence="2">
    <location>
        <position position="441"/>
    </location>
    <ligand>
        <name>[4Fe-4S] cluster</name>
        <dbReference type="ChEBI" id="CHEBI:49883"/>
    </ligand>
</feature>
<feature type="binding site" evidence="2">
    <location>
        <position position="507"/>
    </location>
    <ligand>
        <name>[4Fe-4S] cluster</name>
        <dbReference type="ChEBI" id="CHEBI:49883"/>
    </ligand>
</feature>
<feature type="binding site" evidence="2">
    <location>
        <position position="510"/>
    </location>
    <ligand>
        <name>[4Fe-4S] cluster</name>
        <dbReference type="ChEBI" id="CHEBI:49883"/>
    </ligand>
</feature>
<feature type="binding site" evidence="2">
    <location>
        <position position="540"/>
    </location>
    <ligand>
        <name>substrate</name>
    </ligand>
</feature>
<feature type="binding site" evidence="2">
    <location>
        <position position="545"/>
    </location>
    <ligand>
        <name>substrate</name>
    </ligand>
</feature>
<feature type="binding site" evidence="2">
    <location>
        <position position="703"/>
    </location>
    <ligand>
        <name>substrate</name>
    </ligand>
</feature>
<feature type="binding site" evidence="2">
    <location>
        <begin position="784"/>
        <end position="785"/>
    </location>
    <ligand>
        <name>substrate</name>
    </ligand>
</feature>
<feature type="modified residue" description="N-acetylalanine" evidence="11">
    <location>
        <position position="2"/>
    </location>
</feature>
<feature type="sequence conflict" description="In Ref. 1; CAA58046." evidence="8" ref="1">
    <original>H</original>
    <variation>Y</variation>
    <location>
        <position position="130"/>
    </location>
</feature>
<feature type="sequence conflict" description="In Ref. 1; CAA58046." evidence="8" ref="1">
    <original>AT</original>
    <variation>RP</variation>
    <location>
        <begin position="232"/>
        <end position="233"/>
    </location>
</feature>
<feature type="sequence conflict" description="In Ref. 1; CAA58046." evidence="8" ref="1">
    <original>SRRGNDEIMARGT</original>
    <variation>VAVVMMRLWREH</variation>
    <location>
        <begin position="715"/>
        <end position="727"/>
    </location>
</feature>
<reference key="1">
    <citation type="journal article" date="1995" name="J. Biol. Chem.">
        <title>Structure, genomic organization, and expression of the Arabidopsis thaliana aconitase gene. Plant aconitase show significant homology with mammalian iron-responsive element-binding protein.</title>
        <authorList>
            <person name="Peyret P."/>
            <person name="Perez P."/>
            <person name="Alric M."/>
        </authorList>
    </citation>
    <scope>NUCLEOTIDE SEQUENCE [MRNA]</scope>
    <scope>PARTIAL PROTEIN SEQUENCE</scope>
    <source>
        <strain>cv. Columbia</strain>
    </source>
</reference>
<reference key="2">
    <citation type="journal article" date="1999" name="Nature">
        <title>Sequence and analysis of chromosome 4 of the plant Arabidopsis thaliana.</title>
        <authorList>
            <person name="Mayer K.F.X."/>
            <person name="Schueller C."/>
            <person name="Wambutt R."/>
            <person name="Murphy G."/>
            <person name="Volckaert G."/>
            <person name="Pohl T."/>
            <person name="Duesterhoeft A."/>
            <person name="Stiekema W."/>
            <person name="Entian K.-D."/>
            <person name="Terryn N."/>
            <person name="Harris B."/>
            <person name="Ansorge W."/>
            <person name="Brandt P."/>
            <person name="Grivell L.A."/>
            <person name="Rieger M."/>
            <person name="Weichselgartner M."/>
            <person name="de Simone V."/>
            <person name="Obermaier B."/>
            <person name="Mache R."/>
            <person name="Mueller M."/>
            <person name="Kreis M."/>
            <person name="Delseny M."/>
            <person name="Puigdomenech P."/>
            <person name="Watson M."/>
            <person name="Schmidtheini T."/>
            <person name="Reichert B."/>
            <person name="Portetelle D."/>
            <person name="Perez-Alonso M."/>
            <person name="Boutry M."/>
            <person name="Bancroft I."/>
            <person name="Vos P."/>
            <person name="Hoheisel J."/>
            <person name="Zimmermann W."/>
            <person name="Wedler H."/>
            <person name="Ridley P."/>
            <person name="Langham S.-A."/>
            <person name="McCullagh B."/>
            <person name="Bilham L."/>
            <person name="Robben J."/>
            <person name="van der Schueren J."/>
            <person name="Grymonprez B."/>
            <person name="Chuang Y.-J."/>
            <person name="Vandenbussche F."/>
            <person name="Braeken M."/>
            <person name="Weltjens I."/>
            <person name="Voet M."/>
            <person name="Bastiaens I."/>
            <person name="Aert R."/>
            <person name="Defoor E."/>
            <person name="Weitzenegger T."/>
            <person name="Bothe G."/>
            <person name="Ramsperger U."/>
            <person name="Hilbert H."/>
            <person name="Braun M."/>
            <person name="Holzer E."/>
            <person name="Brandt A."/>
            <person name="Peters S."/>
            <person name="van Staveren M."/>
            <person name="Dirkse W."/>
            <person name="Mooijman P."/>
            <person name="Klein Lankhorst R."/>
            <person name="Rose M."/>
            <person name="Hauf J."/>
            <person name="Koetter P."/>
            <person name="Berneiser S."/>
            <person name="Hempel S."/>
            <person name="Feldpausch M."/>
            <person name="Lamberth S."/>
            <person name="Van den Daele H."/>
            <person name="De Keyser A."/>
            <person name="Buysshaert C."/>
            <person name="Gielen J."/>
            <person name="Villarroel R."/>
            <person name="De Clercq R."/>
            <person name="van Montagu M."/>
            <person name="Rogers J."/>
            <person name="Cronin A."/>
            <person name="Quail M.A."/>
            <person name="Bray-Allen S."/>
            <person name="Clark L."/>
            <person name="Doggett J."/>
            <person name="Hall S."/>
            <person name="Kay M."/>
            <person name="Lennard N."/>
            <person name="McLay K."/>
            <person name="Mayes R."/>
            <person name="Pettett A."/>
            <person name="Rajandream M.A."/>
            <person name="Lyne M."/>
            <person name="Benes V."/>
            <person name="Rechmann S."/>
            <person name="Borkova D."/>
            <person name="Bloecker H."/>
            <person name="Scharfe M."/>
            <person name="Grimm M."/>
            <person name="Loehnert T.-H."/>
            <person name="Dose S."/>
            <person name="de Haan M."/>
            <person name="Maarse A.C."/>
            <person name="Schaefer M."/>
            <person name="Mueller-Auer S."/>
            <person name="Gabel C."/>
            <person name="Fuchs M."/>
            <person name="Fartmann B."/>
            <person name="Granderath K."/>
            <person name="Dauner D."/>
            <person name="Herzl A."/>
            <person name="Neumann S."/>
            <person name="Argiriou A."/>
            <person name="Vitale D."/>
            <person name="Liguori R."/>
            <person name="Piravandi E."/>
            <person name="Massenet O."/>
            <person name="Quigley F."/>
            <person name="Clabauld G."/>
            <person name="Muendlein A."/>
            <person name="Felber R."/>
            <person name="Schnabl S."/>
            <person name="Hiller R."/>
            <person name="Schmidt W."/>
            <person name="Lecharny A."/>
            <person name="Aubourg S."/>
            <person name="Chefdor F."/>
            <person name="Cooke R."/>
            <person name="Berger C."/>
            <person name="Monfort A."/>
            <person name="Casacuberta E."/>
            <person name="Gibbons T."/>
            <person name="Weber N."/>
            <person name="Vandenbol M."/>
            <person name="Bargues M."/>
            <person name="Terol J."/>
            <person name="Torres A."/>
            <person name="Perez-Perez A."/>
            <person name="Purnelle B."/>
            <person name="Bent E."/>
            <person name="Johnson S."/>
            <person name="Tacon D."/>
            <person name="Jesse T."/>
            <person name="Heijnen L."/>
            <person name="Schwarz S."/>
            <person name="Scholler P."/>
            <person name="Heber S."/>
            <person name="Francs P."/>
            <person name="Bielke C."/>
            <person name="Frishman D."/>
            <person name="Haase D."/>
            <person name="Lemcke K."/>
            <person name="Mewes H.-W."/>
            <person name="Stocker S."/>
            <person name="Zaccaria P."/>
            <person name="Bevan M."/>
            <person name="Wilson R.K."/>
            <person name="de la Bastide M."/>
            <person name="Habermann K."/>
            <person name="Parnell L."/>
            <person name="Dedhia N."/>
            <person name="Gnoj L."/>
            <person name="Schutz K."/>
            <person name="Huang E."/>
            <person name="Spiegel L."/>
            <person name="Sekhon M."/>
            <person name="Murray J."/>
            <person name="Sheet P."/>
            <person name="Cordes M."/>
            <person name="Abu-Threideh J."/>
            <person name="Stoneking T."/>
            <person name="Kalicki J."/>
            <person name="Graves T."/>
            <person name="Harmon G."/>
            <person name="Edwards J."/>
            <person name="Latreille P."/>
            <person name="Courtney L."/>
            <person name="Cloud J."/>
            <person name="Abbott A."/>
            <person name="Scott K."/>
            <person name="Johnson D."/>
            <person name="Minx P."/>
            <person name="Bentley D."/>
            <person name="Fulton B."/>
            <person name="Miller N."/>
            <person name="Greco T."/>
            <person name="Kemp K."/>
            <person name="Kramer J."/>
            <person name="Fulton L."/>
            <person name="Mardis E."/>
            <person name="Dante M."/>
            <person name="Pepin K."/>
            <person name="Hillier L.W."/>
            <person name="Nelson J."/>
            <person name="Spieth J."/>
            <person name="Ryan E."/>
            <person name="Andrews S."/>
            <person name="Geisel C."/>
            <person name="Layman D."/>
            <person name="Du H."/>
            <person name="Ali J."/>
            <person name="Berghoff A."/>
            <person name="Jones K."/>
            <person name="Drone K."/>
            <person name="Cotton M."/>
            <person name="Joshu C."/>
            <person name="Antonoiu B."/>
            <person name="Zidanic M."/>
            <person name="Strong C."/>
            <person name="Sun H."/>
            <person name="Lamar B."/>
            <person name="Yordan C."/>
            <person name="Ma P."/>
            <person name="Zhong J."/>
            <person name="Preston R."/>
            <person name="Vil D."/>
            <person name="Shekher M."/>
            <person name="Matero A."/>
            <person name="Shah R."/>
            <person name="Swaby I.K."/>
            <person name="O'Shaughnessy A."/>
            <person name="Rodriguez M."/>
            <person name="Hoffman J."/>
            <person name="Till S."/>
            <person name="Granat S."/>
            <person name="Shohdy N."/>
            <person name="Hasegawa A."/>
            <person name="Hameed A."/>
            <person name="Lodhi M."/>
            <person name="Johnson A."/>
            <person name="Chen E."/>
            <person name="Marra M.A."/>
            <person name="Martienssen R."/>
            <person name="McCombie W.R."/>
        </authorList>
    </citation>
    <scope>NUCLEOTIDE SEQUENCE [LARGE SCALE GENOMIC DNA]</scope>
    <source>
        <strain>cv. Columbia</strain>
    </source>
</reference>
<reference key="3">
    <citation type="journal article" date="2017" name="Plant J.">
        <title>Araport11: a complete reannotation of the Arabidopsis thaliana reference genome.</title>
        <authorList>
            <person name="Cheng C.Y."/>
            <person name="Krishnakumar V."/>
            <person name="Chan A.P."/>
            <person name="Thibaud-Nissen F."/>
            <person name="Schobel S."/>
            <person name="Town C.D."/>
        </authorList>
    </citation>
    <scope>GENOME REANNOTATION</scope>
    <source>
        <strain>cv. Columbia</strain>
    </source>
</reference>
<reference key="4">
    <citation type="journal article" date="2003" name="Science">
        <title>Empirical analysis of transcriptional activity in the Arabidopsis genome.</title>
        <authorList>
            <person name="Yamada K."/>
            <person name="Lim J."/>
            <person name="Dale J.M."/>
            <person name="Chen H."/>
            <person name="Shinn P."/>
            <person name="Palm C.J."/>
            <person name="Southwick A.M."/>
            <person name="Wu H.C."/>
            <person name="Kim C.J."/>
            <person name="Nguyen M."/>
            <person name="Pham P.K."/>
            <person name="Cheuk R.F."/>
            <person name="Karlin-Newmann G."/>
            <person name="Liu S.X."/>
            <person name="Lam B."/>
            <person name="Sakano H."/>
            <person name="Wu T."/>
            <person name="Yu G."/>
            <person name="Miranda M."/>
            <person name="Quach H.L."/>
            <person name="Tripp M."/>
            <person name="Chang C.H."/>
            <person name="Lee J.M."/>
            <person name="Toriumi M.J."/>
            <person name="Chan M.M."/>
            <person name="Tang C.C."/>
            <person name="Onodera C.S."/>
            <person name="Deng J.M."/>
            <person name="Akiyama K."/>
            <person name="Ansari Y."/>
            <person name="Arakawa T."/>
            <person name="Banh J."/>
            <person name="Banno F."/>
            <person name="Bowser L."/>
            <person name="Brooks S.Y."/>
            <person name="Carninci P."/>
            <person name="Chao Q."/>
            <person name="Choy N."/>
            <person name="Enju A."/>
            <person name="Goldsmith A.D."/>
            <person name="Gurjal M."/>
            <person name="Hansen N.F."/>
            <person name="Hayashizaki Y."/>
            <person name="Johnson-Hopson C."/>
            <person name="Hsuan V.W."/>
            <person name="Iida K."/>
            <person name="Karnes M."/>
            <person name="Khan S."/>
            <person name="Koesema E."/>
            <person name="Ishida J."/>
            <person name="Jiang P.X."/>
            <person name="Jones T."/>
            <person name="Kawai J."/>
            <person name="Kamiya A."/>
            <person name="Meyers C."/>
            <person name="Nakajima M."/>
            <person name="Narusaka M."/>
            <person name="Seki M."/>
            <person name="Sakurai T."/>
            <person name="Satou M."/>
            <person name="Tamse R."/>
            <person name="Vaysberg M."/>
            <person name="Wallender E.K."/>
            <person name="Wong C."/>
            <person name="Yamamura Y."/>
            <person name="Yuan S."/>
            <person name="Shinozaki K."/>
            <person name="Davis R.W."/>
            <person name="Theologis A."/>
            <person name="Ecker J.R."/>
        </authorList>
    </citation>
    <scope>NUCLEOTIDE SEQUENCE [LARGE SCALE MRNA]</scope>
    <source>
        <strain>cv. Columbia</strain>
    </source>
</reference>
<reference key="5">
    <citation type="journal article" date="2001" name="Plant Physiol.">
        <title>Proteomic approach to identify novel mitochondrial proteins in Arabidopsis.</title>
        <authorList>
            <person name="Kruft V."/>
            <person name="Eubel H."/>
            <person name="Jaensch L."/>
            <person name="Werhahn W."/>
            <person name="Braun H.-P."/>
        </authorList>
    </citation>
    <scope>PROTEIN SEQUENCE OF 44-52 AND 472-485</scope>
    <source>
        <tissue>Leaf</tissue>
        <tissue>Stem</tissue>
    </source>
</reference>
<reference key="6">
    <citation type="journal article" date="2004" name="Plant Cell">
        <title>Experimental analysis of the Arabidopsis mitochondrial proteome highlights signaling and regulatory components, provides assessment of targeting prediction programs, and indicates plant-specific mitochondrial proteins.</title>
        <authorList>
            <person name="Heazlewood J.L."/>
            <person name="Tonti-Filippini J.S."/>
            <person name="Gout A.M."/>
            <person name="Day D.A."/>
            <person name="Whelan J."/>
            <person name="Millar A.H."/>
        </authorList>
    </citation>
    <scope>IDENTIFICATION BY MASS SPECTROMETRY</scope>
    <scope>SUBCELLULAR LOCATION [LARGE SCALE ANALYSIS]</scope>
    <source>
        <strain>cv. Landsberg erecta</strain>
    </source>
</reference>
<reference key="7">
    <citation type="journal article" date="2007" name="Biochem. J.">
        <title>The iron-responsive element (IRE)/iron-regulatory protein 1 (IRP1)-cytosolic aconitase iron-regulatory switch does not operate in plants.</title>
        <authorList>
            <person name="Arnaud N."/>
            <person name="Ravet K."/>
            <person name="Borlotti A."/>
            <person name="Touraine B."/>
            <person name="Boucherez J."/>
            <person name="Fizames C."/>
            <person name="Briat J.F."/>
            <person name="Cellier F."/>
            <person name="Gaymard F."/>
        </authorList>
    </citation>
    <scope>DISRUPTION PHENOTYPE</scope>
    <scope>TISSUE SPECIFICITY</scope>
    <scope>RESPONSE TO IRON STARVATION</scope>
    <scope>GENE FAMILY</scope>
    <source>
        <strain>cv. Columbia</strain>
    </source>
</reference>
<reference key="8">
    <citation type="journal article" date="2007" name="Plant Mol. Biol.">
        <title>Aconitase plays a role in regulating resistance to oxidative stress and cell death in Arabidopsis and Nicotiana benthamiana.</title>
        <authorList>
            <person name="Moeder W."/>
            <person name="Del Pozo O."/>
            <person name="Navarre D.A."/>
            <person name="Martin G.B."/>
            <person name="Klessig D.F."/>
        </authorList>
    </citation>
    <scope>FUNCTION</scope>
    <scope>DISRUPTION PHENOTYPE</scope>
</reference>
<reference key="9">
    <citation type="journal article" date="2012" name="Mol. Cell. Proteomics">
        <title>Comparative large-scale characterisation of plant vs. mammal proteins reveals similar and idiosyncratic N-alpha acetylation features.</title>
        <authorList>
            <person name="Bienvenut W.V."/>
            <person name="Sumpton D."/>
            <person name="Martinez A."/>
            <person name="Lilla S."/>
            <person name="Espagne C."/>
            <person name="Meinnel T."/>
            <person name="Giglione C."/>
        </authorList>
    </citation>
    <scope>ACETYLATION [LARGE SCALE ANALYSIS] AT ALA-2</scope>
    <scope>CLEAVAGE OF INITIATOR METHIONINE [LARGE SCALE ANALYSIS]</scope>
    <scope>IDENTIFICATION BY MASS SPECTROMETRY [LARGE SCALE ANALYSIS]</scope>
</reference>
<reference key="10">
    <citation type="journal article" date="2014" name="Biochem. J.">
        <title>Selective induction and subcellular distribution of ACONITASE 3 reveal the importance of cytosolic citrate metabolism during lipid mobilization in Arabidopsis.</title>
        <authorList>
            <person name="Hooks M.A."/>
            <person name="Allwood J.W."/>
            <person name="Harrison J.K."/>
            <person name="Kopka J."/>
            <person name="Erban A."/>
            <person name="Goodacre R."/>
            <person name="Balk J."/>
        </authorList>
    </citation>
    <scope>FUNCTION</scope>
    <scope>DISRUPTION PHENOTYPE</scope>
    <source>
        <strain>cv. Columbia</strain>
    </source>
</reference>
<sequence length="898" mass="98152">MASENPFRSILKALEKPDGGEFGNYYSLPALNDPRIDKLPYSIRILLESAIRNCDEFQVKSKDVEKILDWENTSPKQVEIPFKPARVLLQDFTGVPAVVDLACMRDAMNNLGGDSNKINPLVPVDLVIDHSVQVDVARSENAVQANMELEFQRNKERFAFLKWGSNAFHNMLVVPPGSGIVHQVNLEYLARVVFNTNGLLYPDSVVGTDSHTTMIDGLGVAGWGVGGIEAEATMLGQPMSMVLPGVVGFKLTGKLRDGMTATDLVLTVTQMLRKHGVVGKFVEFHGEGMRELSLADRATIANMSPEYGATMGFFPVDHVTLQYLRLTGRSDDTVSMIEAYLRANKMFVDYSEPESKTVYSSCLELNLEDVEPCVSGPKRPHDRVPLKEMKADWHSCLDNRVGFKGFAVPKEAQSKAVEFNFNGTTAQLRHGDVVIAAITSCTNTSNPSVMLGAALVAKKACDLGLEVKPWIKTSLAPGSGVVTKYLAKSGLQKYLNQLGFSIVGYGCTTCIGNSGDIHEAVASAIVDNDLVASAVLSGNRNFEGRVHPLTRANYLASPPLVVAYALAGTVDIDFETQPIGTGKDGKQIFFRDIWPSNKEVAEVVQSSVLPDMFKATYEAITKGNSMWNQLSVASGTLYEWDPKSTYIHEPPYFKGMTMSPPGPHGVKDAYCLLNFGDSITTDHISPAGSIHKDSPAAKYLMERGVDRRDFNSYGSRRGNDEIMARGTFANIRIVNKHLKGEVGPKTVHIPTGEKLSVFDAAMKYRNEGRDTIILAGAEYGSGSSRDWAAKGPMLLGVKAVISKSFERIHRSNLVGMGIIPLCFKAGEDAETLGLTGQELYTIELPNNVSEIKPGQDVTVVTNNGKSFTCTLRFDTEVELAYFDHGGILQYVIRNLIKQ</sequence>
<accession>Q42560</accession>
<accession>Q9SZT1</accession>
<name>ACO1_ARATH</name>